<comment type="function">
    <text evidence="1">Catalyzes the specific phosphorylation of 1,6-anhydro-N-acetylmuramic acid (anhMurNAc) with the simultaneous cleavage of the 1,6-anhydro ring, generating MurNAc-6-P. Is required for the utilization of anhMurNAc either imported from the medium or derived from its own cell wall murein, and thus plays a role in cell wall recycling.</text>
</comment>
<comment type="catalytic activity">
    <reaction evidence="1">
        <text>1,6-anhydro-N-acetyl-beta-muramate + ATP + H2O = N-acetyl-D-muramate 6-phosphate + ADP + H(+)</text>
        <dbReference type="Rhea" id="RHEA:24952"/>
        <dbReference type="ChEBI" id="CHEBI:15377"/>
        <dbReference type="ChEBI" id="CHEBI:15378"/>
        <dbReference type="ChEBI" id="CHEBI:30616"/>
        <dbReference type="ChEBI" id="CHEBI:58690"/>
        <dbReference type="ChEBI" id="CHEBI:58722"/>
        <dbReference type="ChEBI" id="CHEBI:456216"/>
        <dbReference type="EC" id="2.7.1.170"/>
    </reaction>
</comment>
<comment type="pathway">
    <text evidence="1">Amino-sugar metabolism; 1,6-anhydro-N-acetylmuramate degradation.</text>
</comment>
<comment type="pathway">
    <text evidence="1">Cell wall biogenesis; peptidoglycan recycling.</text>
</comment>
<comment type="similarity">
    <text evidence="1">Belongs to the anhydro-N-acetylmuramic acid kinase family.</text>
</comment>
<proteinExistence type="inferred from homology"/>
<accession>A6Q9N6</accession>
<protein>
    <recommendedName>
        <fullName evidence="1">Anhydro-N-acetylmuramic acid kinase</fullName>
        <ecNumber evidence="1">2.7.1.170</ecNumber>
    </recommendedName>
    <alternativeName>
        <fullName evidence="1">AnhMurNAc kinase</fullName>
    </alternativeName>
</protein>
<evidence type="ECO:0000255" key="1">
    <source>
        <dbReference type="HAMAP-Rule" id="MF_01270"/>
    </source>
</evidence>
<organism>
    <name type="scientific">Sulfurovum sp. (strain NBC37-1)</name>
    <dbReference type="NCBI Taxonomy" id="387093"/>
    <lineage>
        <taxon>Bacteria</taxon>
        <taxon>Pseudomonadati</taxon>
        <taxon>Campylobacterota</taxon>
        <taxon>Epsilonproteobacteria</taxon>
        <taxon>Campylobacterales</taxon>
        <taxon>Sulfurovaceae</taxon>
        <taxon>Sulfurovum</taxon>
    </lineage>
</organism>
<gene>
    <name evidence="1" type="primary">anmK</name>
    <name type="ordered locus">SUN_1241</name>
</gene>
<keyword id="KW-0067">ATP-binding</keyword>
<keyword id="KW-0119">Carbohydrate metabolism</keyword>
<keyword id="KW-0418">Kinase</keyword>
<keyword id="KW-0547">Nucleotide-binding</keyword>
<keyword id="KW-0808">Transferase</keyword>
<reference key="1">
    <citation type="journal article" date="2007" name="Proc. Natl. Acad. Sci. U.S.A.">
        <title>Deep-sea vent epsilon-proteobacterial genomes provide insights into emergence of pathogens.</title>
        <authorList>
            <person name="Nakagawa S."/>
            <person name="Takaki Y."/>
            <person name="Shimamura S."/>
            <person name="Reysenbach A.-L."/>
            <person name="Takai K."/>
            <person name="Horikoshi K."/>
        </authorList>
    </citation>
    <scope>NUCLEOTIDE SEQUENCE [LARGE SCALE GENOMIC DNA]</scope>
    <source>
        <strain>NBC37-1</strain>
    </source>
</reference>
<name>ANMK_SULNB</name>
<dbReference type="EC" id="2.7.1.170" evidence="1"/>
<dbReference type="EMBL" id="AP009179">
    <property type="protein sequence ID" value="BAF72195.1"/>
    <property type="molecule type" value="Genomic_DNA"/>
</dbReference>
<dbReference type="RefSeq" id="WP_011980928.1">
    <property type="nucleotide sequence ID" value="NC_009663.1"/>
</dbReference>
<dbReference type="SMR" id="A6Q9N6"/>
<dbReference type="STRING" id="387093.SUN_1241"/>
<dbReference type="KEGG" id="sun:SUN_1241"/>
<dbReference type="eggNOG" id="COG2377">
    <property type="taxonomic scope" value="Bacteria"/>
</dbReference>
<dbReference type="HOGENOM" id="CLU_038782_0_0_7"/>
<dbReference type="OrthoDB" id="9763949at2"/>
<dbReference type="UniPathway" id="UPA00343"/>
<dbReference type="UniPathway" id="UPA00544"/>
<dbReference type="Proteomes" id="UP000006378">
    <property type="component" value="Chromosome"/>
</dbReference>
<dbReference type="GO" id="GO:0005524">
    <property type="term" value="F:ATP binding"/>
    <property type="evidence" value="ECO:0007669"/>
    <property type="project" value="UniProtKB-UniRule"/>
</dbReference>
<dbReference type="GO" id="GO:0016301">
    <property type="term" value="F:kinase activity"/>
    <property type="evidence" value="ECO:0007669"/>
    <property type="project" value="UniProtKB-KW"/>
</dbReference>
<dbReference type="GO" id="GO:0016773">
    <property type="term" value="F:phosphotransferase activity, alcohol group as acceptor"/>
    <property type="evidence" value="ECO:0007669"/>
    <property type="project" value="UniProtKB-UniRule"/>
</dbReference>
<dbReference type="GO" id="GO:0097175">
    <property type="term" value="P:1,6-anhydro-N-acetyl-beta-muramic acid catabolic process"/>
    <property type="evidence" value="ECO:0007669"/>
    <property type="project" value="UniProtKB-UniRule"/>
</dbReference>
<dbReference type="GO" id="GO:0006040">
    <property type="term" value="P:amino sugar metabolic process"/>
    <property type="evidence" value="ECO:0007669"/>
    <property type="project" value="InterPro"/>
</dbReference>
<dbReference type="GO" id="GO:0009254">
    <property type="term" value="P:peptidoglycan turnover"/>
    <property type="evidence" value="ECO:0007669"/>
    <property type="project" value="UniProtKB-UniRule"/>
</dbReference>
<dbReference type="CDD" id="cd24050">
    <property type="entry name" value="ASKHA_NBD_ANMK"/>
    <property type="match status" value="1"/>
</dbReference>
<dbReference type="Gene3D" id="3.30.420.40">
    <property type="match status" value="2"/>
</dbReference>
<dbReference type="HAMAP" id="MF_01270">
    <property type="entry name" value="AnhMurNAc_kinase"/>
    <property type="match status" value="1"/>
</dbReference>
<dbReference type="InterPro" id="IPR005338">
    <property type="entry name" value="Anhydro_N_Ac-Mur_kinase"/>
</dbReference>
<dbReference type="InterPro" id="IPR043129">
    <property type="entry name" value="ATPase_NBD"/>
</dbReference>
<dbReference type="NCBIfam" id="NF007139">
    <property type="entry name" value="PRK09585.1-3"/>
    <property type="match status" value="1"/>
</dbReference>
<dbReference type="PANTHER" id="PTHR30605">
    <property type="entry name" value="ANHYDRO-N-ACETYLMURAMIC ACID KINASE"/>
    <property type="match status" value="1"/>
</dbReference>
<dbReference type="PANTHER" id="PTHR30605:SF0">
    <property type="entry name" value="ANHYDRO-N-ACETYLMURAMIC ACID KINASE"/>
    <property type="match status" value="1"/>
</dbReference>
<dbReference type="Pfam" id="PF03702">
    <property type="entry name" value="AnmK"/>
    <property type="match status" value="1"/>
</dbReference>
<dbReference type="SUPFAM" id="SSF53067">
    <property type="entry name" value="Actin-like ATPase domain"/>
    <property type="match status" value="1"/>
</dbReference>
<feature type="chain" id="PRO_1000067372" description="Anhydro-N-acetylmuramic acid kinase">
    <location>
        <begin position="1"/>
        <end position="359"/>
    </location>
</feature>
<feature type="binding site" evidence="1">
    <location>
        <begin position="12"/>
        <end position="19"/>
    </location>
    <ligand>
        <name>ATP</name>
        <dbReference type="ChEBI" id="CHEBI:30616"/>
    </ligand>
</feature>
<sequence>MNKERYIGIMSGTSLDGVDVVLCEIDKKSCLLKASVEYPFPDDLKKEILSMINGKCTLAQVGSVDVRLGILFSDAVNALLEIEKIDPKSIKAIGSHGQTLWHEPVGKYPFSMQLGDPSAIAVRTGIKVVADFRQKDMALGGQGAPFAPAFHAFLFGGTDASVSILNIGGMANITVLGKTLLGYDTGPGNVLMDMWVAEHKDVTYDRNGEWARSGEVIYPLLEAMLEDPYFSQPHPKSTGREKFNEAWLQKHLNAQHSTLNAHDVQRTLLELTAVSISNEVLKFNQDILLLCGGGAKNAFLVERLGTLMPNIQIGIANDADNIEAMTFAWLAYKRLHNEHVDLKDVTGARQNAILGGVYV</sequence>